<comment type="function">
    <text evidence="2 3">Affects the activity of both ryanodine-sensitive calcium-release channels RyR1 and RyR2 with high potency. At lower concentrations the toxin increases full openings of the RyRs, and at higher concentrations it inhibits full openings and induce openings to subconductance levels and reduces the number of full conductance openings. The different actions may be attributed to the toxins binding at different sites on the RyRs, with binding at a high-affinity site mediating the increase in full openings and the induction of subconductance states evoked upon binding to a lower-affinity site. Insect-selective toxin that provokes a dose-dependent contractile paralysis in crickets and blowfly larvae, followed by death.</text>
</comment>
<comment type="subcellular location">
    <subcellularLocation>
        <location evidence="2">Secreted</location>
    </subcellularLocation>
</comment>
<comment type="tissue specificity">
    <text evidence="2">Expressed by the venom gland.</text>
</comment>
<comment type="domain">
    <text evidence="2">Structure of this peptide is made of two-stranded beta-sheets (or DDH for disulfide-directed beta-hairpin) that is uncommon for a scorpion-venom peptide, since it does not contain the CSalpha/beta, CSalpha/alpha, or knottin motif common to other disulfide-rich scorpion toxins. This structure may be the evolutionary precursor to the knottin motif.</text>
</comment>
<comment type="mass spectrometry">
    <text>Monoisotopic mass.</text>
</comment>
<comment type="toxic dose">
    <text evidence="2">LD(50) is 784 pmol/g of when injected into mealworm, LD(50) is 1284 pmol/g of when injected into cricket, LD(50) is 4382 pmol/g of when injected into blowfly larvae, LD(50) is 4995 pmol/g of when injected into blowfly adult.</text>
</comment>
<comment type="miscellaneous">
    <text evidence="4">May reach its physiological target by traversing membranes, which may be by slow permeation. Alternatively, scorpion venoms are known to contain amphipathic helical peptides that form pores in the cell membrane, and it is possible that these pores would allow Phi-liotoxin-Lw1a to enter the cell (PubMed:23671114).</text>
</comment>
<comment type="miscellaneous">
    <text>Negative results: has no significant effects on sodium (Nav), potassium (Kv) and calcium (Cav) currents (PubMed:21670253, PubMed:23671114).</text>
</comment>
<feature type="signal peptide" evidence="1">
    <location>
        <begin position="1"/>
        <end position="25"/>
    </location>
</feature>
<feature type="propeptide" id="PRO_0000413155" evidence="2">
    <location>
        <begin position="26"/>
        <end position="39"/>
    </location>
</feature>
<feature type="chain" id="PRO_0000413156" description="Phi-liotoxin-Lw1a">
    <location>
        <begin position="40"/>
        <end position="75"/>
    </location>
</feature>
<feature type="disulfide bond" evidence="2">
    <location>
        <begin position="50"/>
        <end position="62"/>
    </location>
</feature>
<feature type="disulfide bond" evidence="2">
    <location>
        <begin position="56"/>
        <end position="68"/>
    </location>
</feature>
<feature type="mutagenesis site" description="Does not induce the full openings seen with the wild-type toxin." evidence="3">
    <original>W</original>
    <variation>A</variation>
    <location>
        <position position="75"/>
    </location>
</feature>
<feature type="strand" evidence="5">
    <location>
        <begin position="67"/>
        <end position="69"/>
    </location>
</feature>
<organism>
    <name type="scientific">Hormurus waigiensis</name>
    <name type="common">Australian rainforest scorpion</name>
    <name type="synonym">Liocheles waigiensis</name>
    <dbReference type="NCBI Taxonomy" id="2900493"/>
    <lineage>
        <taxon>Eukaryota</taxon>
        <taxon>Metazoa</taxon>
        <taxon>Ecdysozoa</taxon>
        <taxon>Arthropoda</taxon>
        <taxon>Chelicerata</taxon>
        <taxon>Arachnida</taxon>
        <taxon>Scorpiones</taxon>
        <taxon>Iurida</taxon>
        <taxon>Scorpionoidea</taxon>
        <taxon>Hormuridae</taxon>
        <taxon>Hormurus</taxon>
    </lineage>
</organism>
<evidence type="ECO:0000255" key="1"/>
<evidence type="ECO:0000269" key="2">
    <source>
    </source>
</evidence>
<evidence type="ECO:0000269" key="3">
    <source>
    </source>
</evidence>
<evidence type="ECO:0000305" key="4">
    <source>
    </source>
</evidence>
<evidence type="ECO:0007829" key="5">
    <source>
        <dbReference type="PDB" id="2KYJ"/>
    </source>
</evidence>
<keyword id="KW-0002">3D-structure</keyword>
<keyword id="KW-0108">Calcium channel impairing toxin</keyword>
<keyword id="KW-0903">Direct protein sequencing</keyword>
<keyword id="KW-1015">Disulfide bond</keyword>
<keyword id="KW-0872">Ion channel impairing toxin</keyword>
<keyword id="KW-1219">Ryanodine-sensitive calcium-release channel impairing toxin</keyword>
<keyword id="KW-0964">Secreted</keyword>
<keyword id="KW-0732">Signal</keyword>
<keyword id="KW-0800">Toxin</keyword>
<reference key="1">
    <citation type="journal article" date="2011" name="Proc. Natl. Acad. Sci. U.S.A.">
        <title>Unique scorpion toxin with a putative ancestral fold provides insight into evolution of the inhibitor cystine knot motif.</title>
        <authorList>
            <person name="Smith J.J."/>
            <person name="Hill J.M."/>
            <person name="Little M.J."/>
            <person name="Nicholson G.M."/>
            <person name="King G.F."/>
            <person name="Alewood P.F."/>
        </authorList>
    </citation>
    <scope>NUCLEOTIDE SEQUENCE [MRNA]</scope>
    <scope>PROTEIN SEQUENCE OF 40-75</scope>
    <scope>SYNTHESIS OF 40-75</scope>
    <scope>FUNCTION</scope>
    <scope>BIOASSAY</scope>
    <scope>SUBCELLULAR LOCATION</scope>
    <scope>TISSUE SPECIFICITY</scope>
    <scope>DOMAIN</scope>
    <scope>TOXIC DOSE</scope>
    <scope>DISULFIDE BOND</scope>
    <scope>MASS SPECTROMETRY</scope>
    <scope>STRUCTURE BY NMR OF 40-75</scope>
    <source>
        <tissue>Venom</tissue>
        <tissue>Venom gland</tissue>
    </source>
</reference>
<reference key="2">
    <citation type="journal article" date="2013" name="Proc. Natl. Acad. Sci. U.S.A.">
        <title>Multiple actions of phi-LITX-Lw1a on ryanodine receptors reveal a functional link between scorpion DDH and ICK toxins.</title>
        <authorList>
            <person name="Smith J.J."/>
            <person name="Vetter I."/>
            <person name="Lewis R.J."/>
            <person name="Peigneur S."/>
            <person name="Tytgat J."/>
            <person name="Lam A."/>
            <person name="Gallant E.M."/>
            <person name="Beard N.A."/>
            <person name="Alewood P.F."/>
            <person name="Dulhunty A.F."/>
        </authorList>
    </citation>
    <scope>FUNCTION</scope>
    <scope>SYNTHESIS OF 40-75</scope>
    <scope>MUTAGENESIS OF TRP-75</scope>
    <source>
        <tissue>Venom</tissue>
    </source>
</reference>
<protein>
    <recommendedName>
        <fullName>Phi-liotoxin-Lw1a</fullName>
        <shortName>Phi-LITX-Lw1a</shortName>
    </recommendedName>
    <alternativeName>
        <fullName>U1-liotoxin-Lw1a</fullName>
        <shortName>U1-LITX-Lw1a</shortName>
    </alternativeName>
</protein>
<sequence>MNFATKVSLLLLAIAVIVIVEGGEGDSWFEEHEESDTERDFPLSKEYESCVRPRKCKPPLKCNKAQICVDPNKGW</sequence>
<proteinExistence type="evidence at protein level"/>
<dbReference type="PDB" id="2KYJ">
    <property type="method" value="NMR"/>
    <property type="chains" value="A=40-75"/>
</dbReference>
<dbReference type="PDBsum" id="2KYJ"/>
<dbReference type="BMRB" id="P0DJ08"/>
<dbReference type="SMR" id="P0DJ08"/>
<dbReference type="TCDB" id="8.B.20.1.1">
    <property type="family name" value="the australian scorpion toxin (liotoxin) family"/>
</dbReference>
<dbReference type="EvolutionaryTrace" id="P0DJ08"/>
<dbReference type="GO" id="GO:0005576">
    <property type="term" value="C:extracellular region"/>
    <property type="evidence" value="ECO:0007669"/>
    <property type="project" value="UniProtKB-SubCell"/>
</dbReference>
<dbReference type="GO" id="GO:0005246">
    <property type="term" value="F:calcium channel regulator activity"/>
    <property type="evidence" value="ECO:0007669"/>
    <property type="project" value="UniProtKB-KW"/>
</dbReference>
<dbReference type="GO" id="GO:0090729">
    <property type="term" value="F:toxin activity"/>
    <property type="evidence" value="ECO:0007669"/>
    <property type="project" value="UniProtKB-KW"/>
</dbReference>
<accession>P0DJ08</accession>
<accession>F8W670</accession>
<name>TXS2B_HORWA</name>